<protein>
    <recommendedName>
        <fullName evidence="1">Large ribosomal subunit protein bL27</fullName>
    </recommendedName>
    <alternativeName>
        <fullName evidence="3">50S ribosomal protein L27</fullName>
    </alternativeName>
</protein>
<organism>
    <name type="scientific">Burkholderia multivorans (strain ATCC 17616 / 249)</name>
    <dbReference type="NCBI Taxonomy" id="395019"/>
    <lineage>
        <taxon>Bacteria</taxon>
        <taxon>Pseudomonadati</taxon>
        <taxon>Pseudomonadota</taxon>
        <taxon>Betaproteobacteria</taxon>
        <taxon>Burkholderiales</taxon>
        <taxon>Burkholderiaceae</taxon>
        <taxon>Burkholderia</taxon>
        <taxon>Burkholderia cepacia complex</taxon>
    </lineage>
</organism>
<sequence>MAHKKAGGSSRNGRDSESKRLGVKVYGGQAINAGGIIVRQRGTRMHAGENVGMGKDHTLFALVDGHVKFATKGADKKHTVIVVPAAA</sequence>
<evidence type="ECO:0000255" key="1">
    <source>
        <dbReference type="HAMAP-Rule" id="MF_00539"/>
    </source>
</evidence>
<evidence type="ECO:0000256" key="2">
    <source>
        <dbReference type="SAM" id="MobiDB-lite"/>
    </source>
</evidence>
<evidence type="ECO:0000305" key="3"/>
<reference key="1">
    <citation type="submission" date="2007-10" db="EMBL/GenBank/DDBJ databases">
        <title>Complete sequence of chromosome 1 of Burkholderia multivorans ATCC 17616.</title>
        <authorList>
            <person name="Copeland A."/>
            <person name="Lucas S."/>
            <person name="Lapidus A."/>
            <person name="Barry K."/>
            <person name="Glavina del Rio T."/>
            <person name="Dalin E."/>
            <person name="Tice H."/>
            <person name="Pitluck S."/>
            <person name="Chain P."/>
            <person name="Malfatti S."/>
            <person name="Shin M."/>
            <person name="Vergez L."/>
            <person name="Schmutz J."/>
            <person name="Larimer F."/>
            <person name="Land M."/>
            <person name="Hauser L."/>
            <person name="Kyrpides N."/>
            <person name="Kim E."/>
            <person name="Tiedje J."/>
            <person name="Richardson P."/>
        </authorList>
    </citation>
    <scope>NUCLEOTIDE SEQUENCE [LARGE SCALE GENOMIC DNA]</scope>
    <source>
        <strain>ATCC 17616 / 249</strain>
    </source>
</reference>
<reference key="2">
    <citation type="submission" date="2007-04" db="EMBL/GenBank/DDBJ databases">
        <title>Complete genome sequence of Burkholderia multivorans ATCC 17616.</title>
        <authorList>
            <person name="Ohtsubo Y."/>
            <person name="Yamashita A."/>
            <person name="Kurokawa K."/>
            <person name="Takami H."/>
            <person name="Yuhara S."/>
            <person name="Nishiyama E."/>
            <person name="Endo R."/>
            <person name="Miyazaki R."/>
            <person name="Ono A."/>
            <person name="Yano K."/>
            <person name="Ito M."/>
            <person name="Sota M."/>
            <person name="Yuji N."/>
            <person name="Hattori M."/>
            <person name="Tsuda M."/>
        </authorList>
    </citation>
    <scope>NUCLEOTIDE SEQUENCE [LARGE SCALE GENOMIC DNA]</scope>
    <source>
        <strain>ATCC 17616 / 249</strain>
    </source>
</reference>
<name>RL27_BURM1</name>
<keyword id="KW-1185">Reference proteome</keyword>
<keyword id="KW-0687">Ribonucleoprotein</keyword>
<keyword id="KW-0689">Ribosomal protein</keyword>
<dbReference type="EMBL" id="CP000868">
    <property type="protein sequence ID" value="ABX16485.1"/>
    <property type="molecule type" value="Genomic_DNA"/>
</dbReference>
<dbReference type="EMBL" id="AP009385">
    <property type="protein sequence ID" value="BAG42403.1"/>
    <property type="molecule type" value="Genomic_DNA"/>
</dbReference>
<dbReference type="RefSeq" id="WP_006400419.1">
    <property type="nucleotide sequence ID" value="NC_010804.1"/>
</dbReference>
<dbReference type="SMR" id="A9AI61"/>
<dbReference type="STRING" id="395019.BMULJ_00436"/>
<dbReference type="GeneID" id="93126756"/>
<dbReference type="KEGG" id="bmj:BMULJ_00436"/>
<dbReference type="KEGG" id="bmu:Bmul_2801"/>
<dbReference type="eggNOG" id="COG0211">
    <property type="taxonomic scope" value="Bacteria"/>
</dbReference>
<dbReference type="HOGENOM" id="CLU_095424_4_1_4"/>
<dbReference type="Proteomes" id="UP000008815">
    <property type="component" value="Chromosome 1"/>
</dbReference>
<dbReference type="GO" id="GO:0022625">
    <property type="term" value="C:cytosolic large ribosomal subunit"/>
    <property type="evidence" value="ECO:0007669"/>
    <property type="project" value="TreeGrafter"/>
</dbReference>
<dbReference type="GO" id="GO:0003735">
    <property type="term" value="F:structural constituent of ribosome"/>
    <property type="evidence" value="ECO:0007669"/>
    <property type="project" value="InterPro"/>
</dbReference>
<dbReference type="GO" id="GO:0006412">
    <property type="term" value="P:translation"/>
    <property type="evidence" value="ECO:0007669"/>
    <property type="project" value="UniProtKB-UniRule"/>
</dbReference>
<dbReference type="FunFam" id="2.40.50.100:FF:000001">
    <property type="entry name" value="50S ribosomal protein L27"/>
    <property type="match status" value="1"/>
</dbReference>
<dbReference type="Gene3D" id="2.40.50.100">
    <property type="match status" value="1"/>
</dbReference>
<dbReference type="HAMAP" id="MF_00539">
    <property type="entry name" value="Ribosomal_bL27"/>
    <property type="match status" value="1"/>
</dbReference>
<dbReference type="InterPro" id="IPR001684">
    <property type="entry name" value="Ribosomal_bL27"/>
</dbReference>
<dbReference type="InterPro" id="IPR018261">
    <property type="entry name" value="Ribosomal_bL27_CS"/>
</dbReference>
<dbReference type="NCBIfam" id="TIGR00062">
    <property type="entry name" value="L27"/>
    <property type="match status" value="1"/>
</dbReference>
<dbReference type="PANTHER" id="PTHR15893:SF0">
    <property type="entry name" value="LARGE RIBOSOMAL SUBUNIT PROTEIN BL27M"/>
    <property type="match status" value="1"/>
</dbReference>
<dbReference type="PANTHER" id="PTHR15893">
    <property type="entry name" value="RIBOSOMAL PROTEIN L27"/>
    <property type="match status" value="1"/>
</dbReference>
<dbReference type="Pfam" id="PF01016">
    <property type="entry name" value="Ribosomal_L27"/>
    <property type="match status" value="1"/>
</dbReference>
<dbReference type="PRINTS" id="PR00063">
    <property type="entry name" value="RIBOSOMALL27"/>
</dbReference>
<dbReference type="SUPFAM" id="SSF110324">
    <property type="entry name" value="Ribosomal L27 protein-like"/>
    <property type="match status" value="1"/>
</dbReference>
<dbReference type="PROSITE" id="PS00831">
    <property type="entry name" value="RIBOSOMAL_L27"/>
    <property type="match status" value="1"/>
</dbReference>
<gene>
    <name evidence="1" type="primary">rpmA</name>
    <name type="ordered locus">Bmul_2801</name>
    <name type="ordered locus">BMULJ_00436</name>
</gene>
<comment type="similarity">
    <text evidence="1">Belongs to the bacterial ribosomal protein bL27 family.</text>
</comment>
<feature type="chain" id="PRO_1000128707" description="Large ribosomal subunit protein bL27">
    <location>
        <begin position="1"/>
        <end position="87"/>
    </location>
</feature>
<feature type="region of interest" description="Disordered" evidence="2">
    <location>
        <begin position="1"/>
        <end position="21"/>
    </location>
</feature>
<accession>A9AI61</accession>
<proteinExistence type="inferred from homology"/>